<accession>B1KMZ8</accession>
<protein>
    <recommendedName>
        <fullName evidence="1">Pantothenate kinase</fullName>
        <ecNumber evidence="1">2.7.1.33</ecNumber>
    </recommendedName>
    <alternativeName>
        <fullName evidence="1">Pantothenic acid kinase</fullName>
    </alternativeName>
</protein>
<feature type="chain" id="PRO_1000099951" description="Pantothenate kinase">
    <location>
        <begin position="1"/>
        <end position="316"/>
    </location>
</feature>
<feature type="binding site" evidence="1">
    <location>
        <begin position="95"/>
        <end position="102"/>
    </location>
    <ligand>
        <name>ATP</name>
        <dbReference type="ChEBI" id="CHEBI:30616"/>
    </ligand>
</feature>
<dbReference type="EC" id="2.7.1.33" evidence="1"/>
<dbReference type="EMBL" id="CP000961">
    <property type="protein sequence ID" value="ACA88955.1"/>
    <property type="molecule type" value="Genomic_DNA"/>
</dbReference>
<dbReference type="RefSeq" id="WP_012327273.1">
    <property type="nucleotide sequence ID" value="NC_010506.1"/>
</dbReference>
<dbReference type="SMR" id="B1KMZ8"/>
<dbReference type="STRING" id="392500.Swoo_4705"/>
<dbReference type="KEGG" id="swd:Swoo_4705"/>
<dbReference type="eggNOG" id="COG1072">
    <property type="taxonomic scope" value="Bacteria"/>
</dbReference>
<dbReference type="HOGENOM" id="CLU_053818_1_1_6"/>
<dbReference type="UniPathway" id="UPA00241">
    <property type="reaction ID" value="UER00352"/>
</dbReference>
<dbReference type="Proteomes" id="UP000002168">
    <property type="component" value="Chromosome"/>
</dbReference>
<dbReference type="GO" id="GO:0005737">
    <property type="term" value="C:cytoplasm"/>
    <property type="evidence" value="ECO:0007669"/>
    <property type="project" value="UniProtKB-SubCell"/>
</dbReference>
<dbReference type="GO" id="GO:0005524">
    <property type="term" value="F:ATP binding"/>
    <property type="evidence" value="ECO:0007669"/>
    <property type="project" value="UniProtKB-UniRule"/>
</dbReference>
<dbReference type="GO" id="GO:0004594">
    <property type="term" value="F:pantothenate kinase activity"/>
    <property type="evidence" value="ECO:0007669"/>
    <property type="project" value="UniProtKB-UniRule"/>
</dbReference>
<dbReference type="GO" id="GO:0015937">
    <property type="term" value="P:coenzyme A biosynthetic process"/>
    <property type="evidence" value="ECO:0007669"/>
    <property type="project" value="UniProtKB-UniRule"/>
</dbReference>
<dbReference type="CDD" id="cd02025">
    <property type="entry name" value="PanK"/>
    <property type="match status" value="1"/>
</dbReference>
<dbReference type="FunFam" id="3.40.50.300:FF:000242">
    <property type="entry name" value="Pantothenate kinase"/>
    <property type="match status" value="1"/>
</dbReference>
<dbReference type="Gene3D" id="3.40.50.300">
    <property type="entry name" value="P-loop containing nucleotide triphosphate hydrolases"/>
    <property type="match status" value="1"/>
</dbReference>
<dbReference type="HAMAP" id="MF_00215">
    <property type="entry name" value="Pantothen_kinase_1"/>
    <property type="match status" value="1"/>
</dbReference>
<dbReference type="InterPro" id="IPR027417">
    <property type="entry name" value="P-loop_NTPase"/>
</dbReference>
<dbReference type="InterPro" id="IPR004566">
    <property type="entry name" value="PanK"/>
</dbReference>
<dbReference type="InterPro" id="IPR006083">
    <property type="entry name" value="PRK/URK"/>
</dbReference>
<dbReference type="NCBIfam" id="TIGR00554">
    <property type="entry name" value="panK_bact"/>
    <property type="match status" value="1"/>
</dbReference>
<dbReference type="PANTHER" id="PTHR10285">
    <property type="entry name" value="URIDINE KINASE"/>
    <property type="match status" value="1"/>
</dbReference>
<dbReference type="Pfam" id="PF00485">
    <property type="entry name" value="PRK"/>
    <property type="match status" value="1"/>
</dbReference>
<dbReference type="PIRSF" id="PIRSF000545">
    <property type="entry name" value="Pantothenate_kin"/>
    <property type="match status" value="1"/>
</dbReference>
<dbReference type="SUPFAM" id="SSF52540">
    <property type="entry name" value="P-loop containing nucleoside triphosphate hydrolases"/>
    <property type="match status" value="1"/>
</dbReference>
<gene>
    <name evidence="1" type="primary">coaA</name>
    <name type="ordered locus">Swoo_4705</name>
</gene>
<reference key="1">
    <citation type="submission" date="2008-02" db="EMBL/GenBank/DDBJ databases">
        <title>Complete sequence of Shewanella woodyi ATCC 51908.</title>
        <authorList>
            <consortium name="US DOE Joint Genome Institute"/>
            <person name="Copeland A."/>
            <person name="Lucas S."/>
            <person name="Lapidus A."/>
            <person name="Glavina del Rio T."/>
            <person name="Dalin E."/>
            <person name="Tice H."/>
            <person name="Bruce D."/>
            <person name="Goodwin L."/>
            <person name="Pitluck S."/>
            <person name="Sims D."/>
            <person name="Brettin T."/>
            <person name="Detter J.C."/>
            <person name="Han C."/>
            <person name="Kuske C.R."/>
            <person name="Schmutz J."/>
            <person name="Larimer F."/>
            <person name="Land M."/>
            <person name="Hauser L."/>
            <person name="Kyrpides N."/>
            <person name="Lykidis A."/>
            <person name="Zhao J.-S."/>
            <person name="Richardson P."/>
        </authorList>
    </citation>
    <scope>NUCLEOTIDE SEQUENCE [LARGE SCALE GENOMIC DNA]</scope>
    <source>
        <strain>ATCC 51908 / MS32</strain>
    </source>
</reference>
<comment type="catalytic activity">
    <reaction evidence="1">
        <text>(R)-pantothenate + ATP = (R)-4'-phosphopantothenate + ADP + H(+)</text>
        <dbReference type="Rhea" id="RHEA:16373"/>
        <dbReference type="ChEBI" id="CHEBI:10986"/>
        <dbReference type="ChEBI" id="CHEBI:15378"/>
        <dbReference type="ChEBI" id="CHEBI:29032"/>
        <dbReference type="ChEBI" id="CHEBI:30616"/>
        <dbReference type="ChEBI" id="CHEBI:456216"/>
        <dbReference type="EC" id="2.7.1.33"/>
    </reaction>
</comment>
<comment type="pathway">
    <text evidence="1">Cofactor biosynthesis; coenzyme A biosynthesis; CoA from (R)-pantothenate: step 1/5.</text>
</comment>
<comment type="subcellular location">
    <subcellularLocation>
        <location evidence="1">Cytoplasm</location>
    </subcellularLocation>
</comment>
<comment type="similarity">
    <text evidence="1">Belongs to the prokaryotic pantothenate kinase family.</text>
</comment>
<organism>
    <name type="scientific">Shewanella woodyi (strain ATCC 51908 / MS32)</name>
    <dbReference type="NCBI Taxonomy" id="392500"/>
    <lineage>
        <taxon>Bacteria</taxon>
        <taxon>Pseudomonadati</taxon>
        <taxon>Pseudomonadota</taxon>
        <taxon>Gammaproteobacteria</taxon>
        <taxon>Alteromonadales</taxon>
        <taxon>Shewanellaceae</taxon>
        <taxon>Shewanella</taxon>
    </lineage>
</organism>
<proteinExistence type="inferred from homology"/>
<keyword id="KW-0067">ATP-binding</keyword>
<keyword id="KW-0173">Coenzyme A biosynthesis</keyword>
<keyword id="KW-0963">Cytoplasm</keyword>
<keyword id="KW-0418">Kinase</keyword>
<keyword id="KW-0547">Nucleotide-binding</keyword>
<keyword id="KW-1185">Reference proteome</keyword>
<keyword id="KW-0808">Transferase</keyword>
<name>COAA_SHEWM</name>
<sequence length="316" mass="35941">MKSENQIHTALYLAFQRSQWAELRESVPLTLNEPELANLRGINEKLSLTEVTDIYLPLSRLLNLIVGAKQKRGLVLNEFLGRKPPKRPYIISIAGSVAVGKSTTARILQALLSQWPEHPRVDLVTTDGFLYPLAELKRRGLLQRKGFPESYDMKLLVEFISNIKAGAPYVEAPLYSHVSYDRITDDHQAIESPDILIIEGLNVLQTSQDAAVGTQQPFVSDFVDFSIYVDAQEQLLKKWYIDRFLQFRGGAFSDENSYFHHYSKLNDKEAKITAANIWDSINGPNLKLNIEPTRDRAHLILQKGDDHLMSQVLLRK</sequence>
<evidence type="ECO:0000255" key="1">
    <source>
        <dbReference type="HAMAP-Rule" id="MF_00215"/>
    </source>
</evidence>